<protein>
    <recommendedName>
        <fullName evidence="1">Chaperonin GroEL 5</fullName>
        <ecNumber evidence="1">5.6.1.7</ecNumber>
    </recommendedName>
    <alternativeName>
        <fullName evidence="1">60 kDa chaperonin 5</fullName>
    </alternativeName>
    <alternativeName>
        <fullName evidence="1">Chaperonin-60 5</fullName>
        <shortName evidence="1">Cpn60 5</shortName>
    </alternativeName>
</protein>
<comment type="function">
    <text evidence="1">Together with its co-chaperonin GroES, plays an essential role in assisting protein folding. The GroEL-GroES system forms a nano-cage that allows encapsulation of the non-native substrate proteins and provides a physical environment optimized to promote and accelerate protein folding.</text>
</comment>
<comment type="catalytic activity">
    <reaction evidence="1">
        <text>ATP + H2O + a folded polypeptide = ADP + phosphate + an unfolded polypeptide.</text>
        <dbReference type="EC" id="5.6.1.7"/>
    </reaction>
</comment>
<comment type="subunit">
    <text evidence="1">Forms a cylinder of 14 subunits composed of two heptameric rings stacked back-to-back. Interacts with the co-chaperonin GroES.</text>
</comment>
<comment type="subcellular location">
    <subcellularLocation>
        <location evidence="1">Cytoplasm</location>
    </subcellularLocation>
</comment>
<comment type="similarity">
    <text evidence="1">Belongs to the chaperonin (HSP60) family.</text>
</comment>
<dbReference type="EC" id="5.6.1.7" evidence="1"/>
<dbReference type="EMBL" id="CP000272">
    <property type="protein sequence ID" value="ABE36060.1"/>
    <property type="molecule type" value="Genomic_DNA"/>
</dbReference>
<dbReference type="RefSeq" id="WP_011493320.1">
    <property type="nucleotide sequence ID" value="NC_007953.1"/>
</dbReference>
<dbReference type="SMR" id="Q13IM9"/>
<dbReference type="STRING" id="266265.Bxe_C0135"/>
<dbReference type="KEGG" id="bxb:DR64_8292"/>
<dbReference type="KEGG" id="bxe:Bxe_C0135"/>
<dbReference type="PATRIC" id="fig|266265.5.peg.7917"/>
<dbReference type="eggNOG" id="COG0459">
    <property type="taxonomic scope" value="Bacteria"/>
</dbReference>
<dbReference type="OrthoDB" id="9766614at2"/>
<dbReference type="Proteomes" id="UP000001817">
    <property type="component" value="Chromosome 3"/>
</dbReference>
<dbReference type="GO" id="GO:0005737">
    <property type="term" value="C:cytoplasm"/>
    <property type="evidence" value="ECO:0007669"/>
    <property type="project" value="UniProtKB-SubCell"/>
</dbReference>
<dbReference type="GO" id="GO:0005524">
    <property type="term" value="F:ATP binding"/>
    <property type="evidence" value="ECO:0007669"/>
    <property type="project" value="UniProtKB-UniRule"/>
</dbReference>
<dbReference type="GO" id="GO:0140662">
    <property type="term" value="F:ATP-dependent protein folding chaperone"/>
    <property type="evidence" value="ECO:0007669"/>
    <property type="project" value="InterPro"/>
</dbReference>
<dbReference type="GO" id="GO:0016853">
    <property type="term" value="F:isomerase activity"/>
    <property type="evidence" value="ECO:0007669"/>
    <property type="project" value="UniProtKB-KW"/>
</dbReference>
<dbReference type="GO" id="GO:0051082">
    <property type="term" value="F:unfolded protein binding"/>
    <property type="evidence" value="ECO:0007669"/>
    <property type="project" value="UniProtKB-UniRule"/>
</dbReference>
<dbReference type="GO" id="GO:0042026">
    <property type="term" value="P:protein refolding"/>
    <property type="evidence" value="ECO:0007669"/>
    <property type="project" value="UniProtKB-UniRule"/>
</dbReference>
<dbReference type="CDD" id="cd03344">
    <property type="entry name" value="GroEL"/>
    <property type="match status" value="1"/>
</dbReference>
<dbReference type="FunFam" id="3.50.7.10:FF:000001">
    <property type="entry name" value="60 kDa chaperonin"/>
    <property type="match status" value="1"/>
</dbReference>
<dbReference type="Gene3D" id="3.50.7.10">
    <property type="entry name" value="GroEL"/>
    <property type="match status" value="1"/>
</dbReference>
<dbReference type="Gene3D" id="1.10.560.10">
    <property type="entry name" value="GroEL-like equatorial domain"/>
    <property type="match status" value="1"/>
</dbReference>
<dbReference type="Gene3D" id="3.30.260.10">
    <property type="entry name" value="TCP-1-like chaperonin intermediate domain"/>
    <property type="match status" value="1"/>
</dbReference>
<dbReference type="HAMAP" id="MF_00600">
    <property type="entry name" value="CH60"/>
    <property type="match status" value="1"/>
</dbReference>
<dbReference type="InterPro" id="IPR018370">
    <property type="entry name" value="Chaperonin_Cpn60_CS"/>
</dbReference>
<dbReference type="InterPro" id="IPR001844">
    <property type="entry name" value="Cpn60/GroEL"/>
</dbReference>
<dbReference type="InterPro" id="IPR002423">
    <property type="entry name" value="Cpn60/GroEL/TCP-1"/>
</dbReference>
<dbReference type="InterPro" id="IPR027409">
    <property type="entry name" value="GroEL-like_apical_dom_sf"/>
</dbReference>
<dbReference type="InterPro" id="IPR027413">
    <property type="entry name" value="GROEL-like_equatorial_sf"/>
</dbReference>
<dbReference type="InterPro" id="IPR027410">
    <property type="entry name" value="TCP-1-like_intermed_sf"/>
</dbReference>
<dbReference type="NCBIfam" id="TIGR02348">
    <property type="entry name" value="GroEL"/>
    <property type="match status" value="1"/>
</dbReference>
<dbReference type="NCBIfam" id="NF000592">
    <property type="entry name" value="PRK00013.1"/>
    <property type="match status" value="1"/>
</dbReference>
<dbReference type="NCBIfam" id="NF009487">
    <property type="entry name" value="PRK12849.1"/>
    <property type="match status" value="1"/>
</dbReference>
<dbReference type="NCBIfam" id="NF009488">
    <property type="entry name" value="PRK12850.1"/>
    <property type="match status" value="1"/>
</dbReference>
<dbReference type="NCBIfam" id="NF009489">
    <property type="entry name" value="PRK12851.1"/>
    <property type="match status" value="1"/>
</dbReference>
<dbReference type="PANTHER" id="PTHR45633">
    <property type="entry name" value="60 KDA HEAT SHOCK PROTEIN, MITOCHONDRIAL"/>
    <property type="match status" value="1"/>
</dbReference>
<dbReference type="Pfam" id="PF00118">
    <property type="entry name" value="Cpn60_TCP1"/>
    <property type="match status" value="1"/>
</dbReference>
<dbReference type="PRINTS" id="PR00298">
    <property type="entry name" value="CHAPERONIN60"/>
</dbReference>
<dbReference type="SUPFAM" id="SSF52029">
    <property type="entry name" value="GroEL apical domain-like"/>
    <property type="match status" value="1"/>
</dbReference>
<dbReference type="SUPFAM" id="SSF48592">
    <property type="entry name" value="GroEL equatorial domain-like"/>
    <property type="match status" value="1"/>
</dbReference>
<dbReference type="SUPFAM" id="SSF54849">
    <property type="entry name" value="GroEL-intermediate domain like"/>
    <property type="match status" value="1"/>
</dbReference>
<dbReference type="PROSITE" id="PS00296">
    <property type="entry name" value="CHAPERONINS_CPN60"/>
    <property type="match status" value="1"/>
</dbReference>
<accession>Q13IM9</accession>
<organism>
    <name type="scientific">Paraburkholderia xenovorans (strain LB400)</name>
    <dbReference type="NCBI Taxonomy" id="266265"/>
    <lineage>
        <taxon>Bacteria</taxon>
        <taxon>Pseudomonadati</taxon>
        <taxon>Pseudomonadota</taxon>
        <taxon>Betaproteobacteria</taxon>
        <taxon>Burkholderiales</taxon>
        <taxon>Burkholderiaceae</taxon>
        <taxon>Paraburkholderia</taxon>
    </lineage>
</organism>
<keyword id="KW-0067">ATP-binding</keyword>
<keyword id="KW-0143">Chaperone</keyword>
<keyword id="KW-0963">Cytoplasm</keyword>
<keyword id="KW-0413">Isomerase</keyword>
<keyword id="KW-0547">Nucleotide-binding</keyword>
<keyword id="KW-1185">Reference proteome</keyword>
<name>CH605_PARXL</name>
<sequence>MAAKEIIFSDVARSKLVEGVNILANAVKVTLGPKGRNVVLERSFGSPVVTKDGVSVAKEIELPDRVQNIGAQLVKEVASRTSDAAGDGTTTATVLAQAIVREGQKYVAAGLNPLDLKRGIDKAVVAAIDELKKISKPTTTSKEIAQVATISANGEESIGQRIAEAIDRVGKEGVITVEDGKSLDDELDVVEGLQFDRGYLSPYFINDQDKQVAVLDNPYVLLHDKKVSNIRDLLPVLEQVAKASRPLLIIAEDVEGEALATLVVNNIRGILKTVAVKAPGFGDRRKALLEDIAILTGGQVIAEETGLTLEKATLAELGQAKRIEVGKENTTVIDGAGEHKNIEARVKQIRAQIDEASSDYDREKLQERVAKLAGGVAVIKVGGATEIEVKEKKDRVDDALHATRAAVEEGIVPGGGVALIRVRNAISGLKGANADQDAGIKIVLRALEEPLRQIVTNAGEEASVVVAKVAEGSGNFGYNAQTGEYGDLVESGVLDPTKVTRTALQNAASVAALLLTTDATVYEAPKDPAPATSAAGPGAPGAGYDF</sequence>
<reference key="1">
    <citation type="journal article" date="2006" name="Proc. Natl. Acad. Sci. U.S.A.">
        <title>Burkholderia xenovorans LB400 harbors a multi-replicon, 9.73-Mbp genome shaped for versatility.</title>
        <authorList>
            <person name="Chain P.S.G."/>
            <person name="Denef V.J."/>
            <person name="Konstantinidis K.T."/>
            <person name="Vergez L.M."/>
            <person name="Agullo L."/>
            <person name="Reyes V.L."/>
            <person name="Hauser L."/>
            <person name="Cordova M."/>
            <person name="Gomez L."/>
            <person name="Gonzalez M."/>
            <person name="Land M."/>
            <person name="Lao V."/>
            <person name="Larimer F."/>
            <person name="LiPuma J.J."/>
            <person name="Mahenthiralingam E."/>
            <person name="Malfatti S.A."/>
            <person name="Marx C.J."/>
            <person name="Parnell J.J."/>
            <person name="Ramette A."/>
            <person name="Richardson P."/>
            <person name="Seeger M."/>
            <person name="Smith D."/>
            <person name="Spilker T."/>
            <person name="Sul W.J."/>
            <person name="Tsoi T.V."/>
            <person name="Ulrich L.E."/>
            <person name="Zhulin I.B."/>
            <person name="Tiedje J.M."/>
        </authorList>
    </citation>
    <scope>NUCLEOTIDE SEQUENCE [LARGE SCALE GENOMIC DNA]</scope>
    <source>
        <strain>LB400</strain>
    </source>
</reference>
<evidence type="ECO:0000255" key="1">
    <source>
        <dbReference type="HAMAP-Rule" id="MF_00600"/>
    </source>
</evidence>
<gene>
    <name evidence="1" type="primary">groEL5</name>
    <name evidence="1" type="synonym">groL5</name>
    <name type="ordered locus">Bxeno_C0132</name>
    <name type="ORF">Bxe_C0135</name>
</gene>
<proteinExistence type="inferred from homology"/>
<feature type="chain" id="PRO_0000256890" description="Chaperonin GroEL 5">
    <location>
        <begin position="1"/>
        <end position="546"/>
    </location>
</feature>
<feature type="binding site" evidence="1">
    <location>
        <begin position="30"/>
        <end position="33"/>
    </location>
    <ligand>
        <name>ATP</name>
        <dbReference type="ChEBI" id="CHEBI:30616"/>
    </ligand>
</feature>
<feature type="binding site" evidence="1">
    <location>
        <position position="51"/>
    </location>
    <ligand>
        <name>ATP</name>
        <dbReference type="ChEBI" id="CHEBI:30616"/>
    </ligand>
</feature>
<feature type="binding site" evidence="1">
    <location>
        <begin position="87"/>
        <end position="91"/>
    </location>
    <ligand>
        <name>ATP</name>
        <dbReference type="ChEBI" id="CHEBI:30616"/>
    </ligand>
</feature>
<feature type="binding site" evidence="1">
    <location>
        <position position="415"/>
    </location>
    <ligand>
        <name>ATP</name>
        <dbReference type="ChEBI" id="CHEBI:30616"/>
    </ligand>
</feature>
<feature type="binding site" evidence="1">
    <location>
        <position position="495"/>
    </location>
    <ligand>
        <name>ATP</name>
        <dbReference type="ChEBI" id="CHEBI:30616"/>
    </ligand>
</feature>